<comment type="function">
    <text evidence="1">Catalyzes the reversible formation of acyl-phosphate (acyl-PO(4)) from acyl-[acyl-carrier-protein] (acyl-ACP). This enzyme utilizes acyl-ACP as fatty acyl donor, but not acyl-CoA.</text>
</comment>
<comment type="catalytic activity">
    <reaction evidence="1">
        <text>a fatty acyl-[ACP] + phosphate = an acyl phosphate + holo-[ACP]</text>
        <dbReference type="Rhea" id="RHEA:42292"/>
        <dbReference type="Rhea" id="RHEA-COMP:9685"/>
        <dbReference type="Rhea" id="RHEA-COMP:14125"/>
        <dbReference type="ChEBI" id="CHEBI:43474"/>
        <dbReference type="ChEBI" id="CHEBI:59918"/>
        <dbReference type="ChEBI" id="CHEBI:64479"/>
        <dbReference type="ChEBI" id="CHEBI:138651"/>
        <dbReference type="EC" id="2.3.1.274"/>
    </reaction>
</comment>
<comment type="pathway">
    <text evidence="1">Lipid metabolism; phospholipid metabolism.</text>
</comment>
<comment type="subunit">
    <text evidence="1">Homodimer. Probably interacts with PlsY.</text>
</comment>
<comment type="subcellular location">
    <subcellularLocation>
        <location evidence="1">Cytoplasm</location>
    </subcellularLocation>
    <text evidence="1">Associated with the membrane possibly through PlsY.</text>
</comment>
<comment type="similarity">
    <text evidence="1">Belongs to the PlsX family.</text>
</comment>
<organism>
    <name type="scientific">Mycoplasma mobile (strain ATCC 43663 / 163K / NCTC 11711)</name>
    <name type="common">Mesomycoplasma mobile</name>
    <dbReference type="NCBI Taxonomy" id="267748"/>
    <lineage>
        <taxon>Bacteria</taxon>
        <taxon>Bacillati</taxon>
        <taxon>Mycoplasmatota</taxon>
        <taxon>Mycoplasmoidales</taxon>
        <taxon>Metamycoplasmataceae</taxon>
        <taxon>Mesomycoplasma</taxon>
    </lineage>
</organism>
<sequence>MKIIAFDVMGSDKGVGPAVLASINFVKKNLDYKIILVGDKTLITKYVSENERIEIYDEPLEVKKGENLKAVLSKTTSMSVAIDLVKDNKAEVVLSAGDSASYLALCVIKLKRLEGITRPAFMPIFPTILDDKKFVLLDVGANIEVDTEYLVQWAKLGSVFAKIMWNIDKPNVGILNIGTEDFKGFKYHQEANQILKEANLSEMNYKGFVEPRDILKGNFDVIVADGYGGNLVLKSLEGTVIDFSSLIKRKITSTFFRKIGALILKKSFKEIKEHLDYRNVGGAWVIGVNSIAVKAHGSSDEKAFKGAFNQIKIAVENNVIENFKEIL</sequence>
<proteinExistence type="inferred from homology"/>
<feature type="chain" id="PRO_0000189906" description="Phosphate acyltransferase">
    <location>
        <begin position="1"/>
        <end position="327"/>
    </location>
</feature>
<accession>Q6KHN2</accession>
<protein>
    <recommendedName>
        <fullName evidence="1">Phosphate acyltransferase</fullName>
        <ecNumber evidence="1">2.3.1.274</ecNumber>
    </recommendedName>
    <alternativeName>
        <fullName evidence="1">Acyl-ACP phosphotransacylase</fullName>
    </alternativeName>
    <alternativeName>
        <fullName evidence="1">Acyl-[acyl-carrier-protein]--phosphate acyltransferase</fullName>
    </alternativeName>
    <alternativeName>
        <fullName evidence="1">Phosphate-acyl-ACP acyltransferase</fullName>
    </alternativeName>
</protein>
<name>PLSX_MYCM1</name>
<dbReference type="EC" id="2.3.1.274" evidence="1"/>
<dbReference type="EMBL" id="AE017308">
    <property type="protein sequence ID" value="AAT27898.1"/>
    <property type="molecule type" value="Genomic_DNA"/>
</dbReference>
<dbReference type="RefSeq" id="WP_011264932.1">
    <property type="nucleotide sequence ID" value="NC_006908.1"/>
</dbReference>
<dbReference type="SMR" id="Q6KHN2"/>
<dbReference type="STRING" id="267748.MMOB4120"/>
<dbReference type="KEGG" id="mmo:MMOB4120"/>
<dbReference type="eggNOG" id="COG0416">
    <property type="taxonomic scope" value="Bacteria"/>
</dbReference>
<dbReference type="HOGENOM" id="CLU_039379_1_1_14"/>
<dbReference type="OrthoDB" id="9806408at2"/>
<dbReference type="UniPathway" id="UPA00085"/>
<dbReference type="Proteomes" id="UP000009072">
    <property type="component" value="Chromosome"/>
</dbReference>
<dbReference type="GO" id="GO:0005737">
    <property type="term" value="C:cytoplasm"/>
    <property type="evidence" value="ECO:0007669"/>
    <property type="project" value="UniProtKB-SubCell"/>
</dbReference>
<dbReference type="GO" id="GO:0043811">
    <property type="term" value="F:phosphate:acyl-[acyl carrier protein] acyltransferase activity"/>
    <property type="evidence" value="ECO:0007669"/>
    <property type="project" value="UniProtKB-UniRule"/>
</dbReference>
<dbReference type="GO" id="GO:0006633">
    <property type="term" value="P:fatty acid biosynthetic process"/>
    <property type="evidence" value="ECO:0007669"/>
    <property type="project" value="UniProtKB-UniRule"/>
</dbReference>
<dbReference type="GO" id="GO:0008654">
    <property type="term" value="P:phospholipid biosynthetic process"/>
    <property type="evidence" value="ECO:0007669"/>
    <property type="project" value="UniProtKB-KW"/>
</dbReference>
<dbReference type="Gene3D" id="3.40.718.10">
    <property type="entry name" value="Isopropylmalate Dehydrogenase"/>
    <property type="match status" value="1"/>
</dbReference>
<dbReference type="HAMAP" id="MF_00019">
    <property type="entry name" value="PlsX"/>
    <property type="match status" value="1"/>
</dbReference>
<dbReference type="InterPro" id="IPR003664">
    <property type="entry name" value="FA_synthesis"/>
</dbReference>
<dbReference type="InterPro" id="IPR012281">
    <property type="entry name" value="Phospholipid_synth_PlsX-like"/>
</dbReference>
<dbReference type="NCBIfam" id="TIGR00182">
    <property type="entry name" value="plsX"/>
    <property type="match status" value="1"/>
</dbReference>
<dbReference type="PANTHER" id="PTHR30100">
    <property type="entry name" value="FATTY ACID/PHOSPHOLIPID SYNTHESIS PROTEIN PLSX"/>
    <property type="match status" value="1"/>
</dbReference>
<dbReference type="PANTHER" id="PTHR30100:SF1">
    <property type="entry name" value="PHOSPHATE ACYLTRANSFERASE"/>
    <property type="match status" value="1"/>
</dbReference>
<dbReference type="Pfam" id="PF02504">
    <property type="entry name" value="FA_synthesis"/>
    <property type="match status" value="1"/>
</dbReference>
<dbReference type="PIRSF" id="PIRSF002465">
    <property type="entry name" value="Phsphlp_syn_PlsX"/>
    <property type="match status" value="1"/>
</dbReference>
<dbReference type="SUPFAM" id="SSF53659">
    <property type="entry name" value="Isocitrate/Isopropylmalate dehydrogenase-like"/>
    <property type="match status" value="1"/>
</dbReference>
<keyword id="KW-0963">Cytoplasm</keyword>
<keyword id="KW-0444">Lipid biosynthesis</keyword>
<keyword id="KW-0443">Lipid metabolism</keyword>
<keyword id="KW-0594">Phospholipid biosynthesis</keyword>
<keyword id="KW-1208">Phospholipid metabolism</keyword>
<keyword id="KW-1185">Reference proteome</keyword>
<keyword id="KW-0808">Transferase</keyword>
<gene>
    <name evidence="1" type="primary">plsX</name>
    <name type="ordered locus">MMOB4120</name>
</gene>
<evidence type="ECO:0000255" key="1">
    <source>
        <dbReference type="HAMAP-Rule" id="MF_00019"/>
    </source>
</evidence>
<reference key="1">
    <citation type="journal article" date="2004" name="Genome Res.">
        <title>The complete genome and proteome of Mycoplasma mobile.</title>
        <authorList>
            <person name="Jaffe J.D."/>
            <person name="Stange-Thomann N."/>
            <person name="Smith C."/>
            <person name="DeCaprio D."/>
            <person name="Fisher S."/>
            <person name="Butler J."/>
            <person name="Calvo S."/>
            <person name="Elkins T."/>
            <person name="FitzGerald M.G."/>
            <person name="Hafez N."/>
            <person name="Kodira C.D."/>
            <person name="Major J."/>
            <person name="Wang S."/>
            <person name="Wilkinson J."/>
            <person name="Nicol R."/>
            <person name="Nusbaum C."/>
            <person name="Birren B."/>
            <person name="Berg H.C."/>
            <person name="Church G.M."/>
        </authorList>
    </citation>
    <scope>NUCLEOTIDE SEQUENCE [LARGE SCALE GENOMIC DNA]</scope>
    <source>
        <strain>ATCC 43663 / NCTC 11711 / 163 K</strain>
    </source>
</reference>